<proteinExistence type="inferred from homology"/>
<keyword id="KW-0227">DNA damage</keyword>
<keyword id="KW-0233">DNA recombination</keyword>
<keyword id="KW-0234">DNA repair</keyword>
<keyword id="KW-0479">Metal-binding</keyword>
<keyword id="KW-1185">Reference proteome</keyword>
<keyword id="KW-0862">Zinc</keyword>
<keyword id="KW-0863">Zinc-finger</keyword>
<sequence>MQTSPLLTQLMEALRCLPGVGPKSAQRMAFTLLQRDRSGGMRLAQALTRAMSEIGHCADCRTFTEQEVCNICSNPRRQENGQICVVESPADIYAIEQTGQFSGRYFVLMGHLSPLDGIGPDDIGLDRLEQRLAEEKITEVILATNPTVEGEATANYIAELCAQYDVEASRIAHGVPVGGELEMVDGTTLSHSLAGRHKIRF</sequence>
<organism>
    <name type="scientific">Escherichia coli O139:H28 (strain E24377A / ETEC)</name>
    <dbReference type="NCBI Taxonomy" id="331111"/>
    <lineage>
        <taxon>Bacteria</taxon>
        <taxon>Pseudomonadati</taxon>
        <taxon>Pseudomonadota</taxon>
        <taxon>Gammaproteobacteria</taxon>
        <taxon>Enterobacterales</taxon>
        <taxon>Enterobacteriaceae</taxon>
        <taxon>Escherichia</taxon>
    </lineage>
</organism>
<dbReference type="EMBL" id="CP000800">
    <property type="protein sequence ID" value="ABV19567.1"/>
    <property type="molecule type" value="Genomic_DNA"/>
</dbReference>
<dbReference type="RefSeq" id="WP_001195025.1">
    <property type="nucleotide sequence ID" value="NC_009801.1"/>
</dbReference>
<dbReference type="SMR" id="A7ZIN2"/>
<dbReference type="GeneID" id="93776978"/>
<dbReference type="KEGG" id="ecw:EcE24377A_0510"/>
<dbReference type="HOGENOM" id="CLU_060739_1_2_6"/>
<dbReference type="Proteomes" id="UP000001122">
    <property type="component" value="Chromosome"/>
</dbReference>
<dbReference type="GO" id="GO:0003677">
    <property type="term" value="F:DNA binding"/>
    <property type="evidence" value="ECO:0007669"/>
    <property type="project" value="UniProtKB-UniRule"/>
</dbReference>
<dbReference type="GO" id="GO:0008270">
    <property type="term" value="F:zinc ion binding"/>
    <property type="evidence" value="ECO:0007669"/>
    <property type="project" value="UniProtKB-KW"/>
</dbReference>
<dbReference type="GO" id="GO:0006310">
    <property type="term" value="P:DNA recombination"/>
    <property type="evidence" value="ECO:0007669"/>
    <property type="project" value="UniProtKB-UniRule"/>
</dbReference>
<dbReference type="GO" id="GO:0006281">
    <property type="term" value="P:DNA repair"/>
    <property type="evidence" value="ECO:0007669"/>
    <property type="project" value="UniProtKB-UniRule"/>
</dbReference>
<dbReference type="CDD" id="cd01025">
    <property type="entry name" value="TOPRIM_recR"/>
    <property type="match status" value="1"/>
</dbReference>
<dbReference type="FunFam" id="1.10.8.420:FF:000001">
    <property type="entry name" value="Recombination protein RecR"/>
    <property type="match status" value="1"/>
</dbReference>
<dbReference type="FunFam" id="3.40.1360.10:FF:000001">
    <property type="entry name" value="Recombination protein RecR"/>
    <property type="match status" value="1"/>
</dbReference>
<dbReference type="Gene3D" id="3.40.1360.10">
    <property type="match status" value="1"/>
</dbReference>
<dbReference type="Gene3D" id="6.10.250.240">
    <property type="match status" value="1"/>
</dbReference>
<dbReference type="Gene3D" id="1.10.8.420">
    <property type="entry name" value="RecR Domain 1"/>
    <property type="match status" value="1"/>
</dbReference>
<dbReference type="HAMAP" id="MF_00017">
    <property type="entry name" value="RecR"/>
    <property type="match status" value="1"/>
</dbReference>
<dbReference type="InterPro" id="IPR000093">
    <property type="entry name" value="DNA_Rcmb_RecR"/>
</dbReference>
<dbReference type="InterPro" id="IPR023627">
    <property type="entry name" value="Rcmb_RecR"/>
</dbReference>
<dbReference type="InterPro" id="IPR015967">
    <property type="entry name" value="Rcmb_RecR_Znf"/>
</dbReference>
<dbReference type="InterPro" id="IPR006171">
    <property type="entry name" value="TOPRIM_dom"/>
</dbReference>
<dbReference type="InterPro" id="IPR034137">
    <property type="entry name" value="TOPRIM_RecR"/>
</dbReference>
<dbReference type="NCBIfam" id="TIGR00615">
    <property type="entry name" value="recR"/>
    <property type="match status" value="1"/>
</dbReference>
<dbReference type="PANTHER" id="PTHR30446">
    <property type="entry name" value="RECOMBINATION PROTEIN RECR"/>
    <property type="match status" value="1"/>
</dbReference>
<dbReference type="PANTHER" id="PTHR30446:SF0">
    <property type="entry name" value="RECOMBINATION PROTEIN RECR"/>
    <property type="match status" value="1"/>
</dbReference>
<dbReference type="Pfam" id="PF21175">
    <property type="entry name" value="RecR_C"/>
    <property type="match status" value="1"/>
</dbReference>
<dbReference type="Pfam" id="PF21176">
    <property type="entry name" value="RecR_HhH"/>
    <property type="match status" value="1"/>
</dbReference>
<dbReference type="Pfam" id="PF02132">
    <property type="entry name" value="RecR_ZnF"/>
    <property type="match status" value="1"/>
</dbReference>
<dbReference type="Pfam" id="PF13662">
    <property type="entry name" value="Toprim_4"/>
    <property type="match status" value="1"/>
</dbReference>
<dbReference type="SMART" id="SM00493">
    <property type="entry name" value="TOPRIM"/>
    <property type="match status" value="1"/>
</dbReference>
<dbReference type="SUPFAM" id="SSF111304">
    <property type="entry name" value="Recombination protein RecR"/>
    <property type="match status" value="1"/>
</dbReference>
<dbReference type="PROSITE" id="PS01300">
    <property type="entry name" value="RECR"/>
    <property type="match status" value="1"/>
</dbReference>
<dbReference type="PROSITE" id="PS50880">
    <property type="entry name" value="TOPRIM"/>
    <property type="match status" value="1"/>
</dbReference>
<gene>
    <name evidence="1" type="primary">recR</name>
    <name type="ordered locus">EcE24377A_0510</name>
</gene>
<accession>A7ZIN2</accession>
<feature type="chain" id="PRO_1000057152" description="Recombination protein RecR">
    <location>
        <begin position="1"/>
        <end position="201"/>
    </location>
</feature>
<feature type="domain" description="Toprim" evidence="1">
    <location>
        <begin position="81"/>
        <end position="176"/>
    </location>
</feature>
<feature type="zinc finger region" description="C4-type" evidence="1">
    <location>
        <begin position="57"/>
        <end position="72"/>
    </location>
</feature>
<comment type="function">
    <text evidence="1">May play a role in DNA repair. It seems to be involved in an RecBC-independent recombinational process of DNA repair. It may act with RecF and RecO.</text>
</comment>
<comment type="similarity">
    <text evidence="1">Belongs to the RecR family.</text>
</comment>
<reference key="1">
    <citation type="journal article" date="2008" name="J. Bacteriol.">
        <title>The pangenome structure of Escherichia coli: comparative genomic analysis of E. coli commensal and pathogenic isolates.</title>
        <authorList>
            <person name="Rasko D.A."/>
            <person name="Rosovitz M.J."/>
            <person name="Myers G.S.A."/>
            <person name="Mongodin E.F."/>
            <person name="Fricke W.F."/>
            <person name="Gajer P."/>
            <person name="Crabtree J."/>
            <person name="Sebaihia M."/>
            <person name="Thomson N.R."/>
            <person name="Chaudhuri R."/>
            <person name="Henderson I.R."/>
            <person name="Sperandio V."/>
            <person name="Ravel J."/>
        </authorList>
    </citation>
    <scope>NUCLEOTIDE SEQUENCE [LARGE SCALE GENOMIC DNA]</scope>
    <source>
        <strain>E24377A / ETEC</strain>
    </source>
</reference>
<evidence type="ECO:0000255" key="1">
    <source>
        <dbReference type="HAMAP-Rule" id="MF_00017"/>
    </source>
</evidence>
<name>RECR_ECO24</name>
<protein>
    <recommendedName>
        <fullName evidence="1">Recombination protein RecR</fullName>
    </recommendedName>
</protein>